<proteinExistence type="evidence at protein level"/>
<comment type="function">
    <text evidence="1 5">Lysosomal serine protease with tripeptidyl-peptidase I activity (PubMed:28464005). May act as a non-specific lysosomal peptidase which generates tripeptides from the breakdown products produced by lysosomal proteinases (By similarity). Requires substrates with an unsubstituted N-terminus (By similarity).</text>
</comment>
<comment type="catalytic activity">
    <reaction evidence="5">
        <text>Release of an N-terminal tripeptide from a polypeptide, but also has endopeptidase activity.</text>
        <dbReference type="EC" id="3.4.14.9"/>
    </reaction>
</comment>
<comment type="cofactor">
    <cofactor evidence="1">
        <name>Ca(2+)</name>
        <dbReference type="ChEBI" id="CHEBI:29108"/>
    </cofactor>
    <text evidence="1">Binds 1 Ca(2+) ion per subunit.</text>
</comment>
<comment type="subunit">
    <text evidence="1 4">Monomer (By similarity). Interacts with CLN5 (PubMed:19941651). Interacts with CLN3 (By similarity).</text>
</comment>
<comment type="interaction">
    <interactant intactId="EBI-7051084">
        <id>O89023</id>
    </interactant>
    <interactant intactId="EBI-7051001">
        <id>Q91WC1</id>
        <label>Pot1</label>
    </interactant>
    <organismsDiffer>false</organismsDiffer>
    <experiments>2</experiments>
</comment>
<comment type="subcellular location">
    <subcellularLocation>
        <location evidence="4">Lysosome</location>
    </subcellularLocation>
    <subcellularLocation>
        <location evidence="1">Melanosome</location>
    </subcellularLocation>
</comment>
<comment type="PTM">
    <text evidence="1">Activated by autocatalytic proteolytical processing upon acidification. N-glycosylation is required for processing and activity (By similarity).</text>
</comment>
<comment type="sequence caution" evidence="6">
    <conflict type="erroneous initiation">
        <sequence resource="EMBL-CDS" id="CAA09863"/>
    </conflict>
</comment>
<organism>
    <name type="scientific">Mus musculus</name>
    <name type="common">Mouse</name>
    <dbReference type="NCBI Taxonomy" id="10090"/>
    <lineage>
        <taxon>Eukaryota</taxon>
        <taxon>Metazoa</taxon>
        <taxon>Chordata</taxon>
        <taxon>Craniata</taxon>
        <taxon>Vertebrata</taxon>
        <taxon>Euteleostomi</taxon>
        <taxon>Mammalia</taxon>
        <taxon>Eutheria</taxon>
        <taxon>Euarchontoglires</taxon>
        <taxon>Glires</taxon>
        <taxon>Rodentia</taxon>
        <taxon>Myomorpha</taxon>
        <taxon>Muroidea</taxon>
        <taxon>Muridae</taxon>
        <taxon>Murinae</taxon>
        <taxon>Mus</taxon>
        <taxon>Mus</taxon>
    </lineage>
</organism>
<protein>
    <recommendedName>
        <fullName>Tripeptidyl-peptidase 1</fullName>
        <shortName>TPP-1</shortName>
        <ecNumber evidence="5">3.4.14.9</ecNumber>
    </recommendedName>
    <alternativeName>
        <fullName>Lysosomal pepstatin-insensitive protease</fullName>
        <shortName>LPIC</shortName>
    </alternativeName>
    <alternativeName>
        <fullName>Tripeptidyl aminopeptidase</fullName>
    </alternativeName>
    <alternativeName>
        <fullName>Tripeptidyl-peptidase I</fullName>
        <shortName>TPP-I</shortName>
    </alternativeName>
</protein>
<dbReference type="EC" id="3.4.14.9" evidence="5"/>
<dbReference type="EMBL" id="AJ011912">
    <property type="protein sequence ID" value="CAA09863.1"/>
    <property type="status" value="ALT_INIT"/>
    <property type="molecule type" value="mRNA"/>
</dbReference>
<dbReference type="EMBL" id="AF124599">
    <property type="protein sequence ID" value="AAD32573.1"/>
    <property type="molecule type" value="Genomic_DNA"/>
</dbReference>
<dbReference type="EMBL" id="AF111172">
    <property type="protein sequence ID" value="AAD03083.1"/>
    <property type="molecule type" value="mRNA"/>
</dbReference>
<dbReference type="EMBL" id="AK002418">
    <property type="protein sequence ID" value="BAB22085.1"/>
    <property type="molecule type" value="mRNA"/>
</dbReference>
<dbReference type="EMBL" id="AK048279">
    <property type="protein sequence ID" value="BAC33293.1"/>
    <property type="molecule type" value="mRNA"/>
</dbReference>
<dbReference type="EMBL" id="AK170781">
    <property type="protein sequence ID" value="BAE42026.1"/>
    <property type="molecule type" value="mRNA"/>
</dbReference>
<dbReference type="EMBL" id="BC024820">
    <property type="protein sequence ID" value="AAH24820.1"/>
    <property type="molecule type" value="mRNA"/>
</dbReference>
<dbReference type="CCDS" id="CCDS21661.1"/>
<dbReference type="RefSeq" id="NP_034036.1">
    <property type="nucleotide sequence ID" value="NM_009906.6"/>
</dbReference>
<dbReference type="SMR" id="O89023"/>
<dbReference type="BioGRID" id="198754">
    <property type="interactions" value="6"/>
</dbReference>
<dbReference type="FunCoup" id="O89023">
    <property type="interactions" value="815"/>
</dbReference>
<dbReference type="IntAct" id="O89023">
    <property type="interactions" value="1"/>
</dbReference>
<dbReference type="MINT" id="O89023"/>
<dbReference type="STRING" id="10090.ENSMUSP00000033184"/>
<dbReference type="MEROPS" id="S53.003"/>
<dbReference type="GlyConnect" id="2800">
    <property type="glycosylation" value="9 N-Linked glycans (3 sites)"/>
</dbReference>
<dbReference type="GlyCosmos" id="O89023">
    <property type="glycosylation" value="5 sites, 9 glycans"/>
</dbReference>
<dbReference type="GlyGen" id="O89023">
    <property type="glycosylation" value="5 sites, 11 N-linked glycans (3 sites)"/>
</dbReference>
<dbReference type="iPTMnet" id="O89023"/>
<dbReference type="PhosphoSitePlus" id="O89023"/>
<dbReference type="SwissPalm" id="O89023"/>
<dbReference type="jPOST" id="O89023"/>
<dbReference type="PaxDb" id="10090-ENSMUSP00000033184"/>
<dbReference type="PeptideAtlas" id="O89023"/>
<dbReference type="ProteomicsDB" id="259169"/>
<dbReference type="Pumba" id="O89023"/>
<dbReference type="Antibodypedia" id="23932">
    <property type="antibodies" value="423 antibodies from 38 providers"/>
</dbReference>
<dbReference type="DNASU" id="12751"/>
<dbReference type="Ensembl" id="ENSMUST00000033184.6">
    <property type="protein sequence ID" value="ENSMUSP00000033184.5"/>
    <property type="gene ID" value="ENSMUSG00000030894.6"/>
</dbReference>
<dbReference type="GeneID" id="12751"/>
<dbReference type="KEGG" id="mmu:12751"/>
<dbReference type="UCSC" id="uc009izg.1">
    <property type="organism name" value="mouse"/>
</dbReference>
<dbReference type="AGR" id="MGI:1336194"/>
<dbReference type="CTD" id="1200"/>
<dbReference type="MGI" id="MGI:1336194">
    <property type="gene designation" value="Tpp1"/>
</dbReference>
<dbReference type="VEuPathDB" id="HostDB:ENSMUSG00000030894"/>
<dbReference type="eggNOG" id="ENOG502QR6D">
    <property type="taxonomic scope" value="Eukaryota"/>
</dbReference>
<dbReference type="GeneTree" id="ENSGT00390000008684"/>
<dbReference type="HOGENOM" id="CLU_013783_5_1_1"/>
<dbReference type="InParanoid" id="O89023"/>
<dbReference type="OMA" id="YARSVCN"/>
<dbReference type="OrthoDB" id="2919105at2759"/>
<dbReference type="PhylomeDB" id="O89023"/>
<dbReference type="TreeFam" id="TF333497"/>
<dbReference type="BRENDA" id="3.4.14.9">
    <property type="organism ID" value="3474"/>
</dbReference>
<dbReference type="BioGRID-ORCS" id="12751">
    <property type="hits" value="2 hits in 79 CRISPR screens"/>
</dbReference>
<dbReference type="ChiTaRS" id="Tpp1">
    <property type="organism name" value="mouse"/>
</dbReference>
<dbReference type="PRO" id="PR:O89023"/>
<dbReference type="Proteomes" id="UP000000589">
    <property type="component" value="Chromosome 7"/>
</dbReference>
<dbReference type="RNAct" id="O89023">
    <property type="molecule type" value="protein"/>
</dbReference>
<dbReference type="Bgee" id="ENSMUSG00000030894">
    <property type="expression patterns" value="Expressed in choroid plexus of fourth ventricle and 260 other cell types or tissues"/>
</dbReference>
<dbReference type="ExpressionAtlas" id="O89023">
    <property type="expression patterns" value="baseline and differential"/>
</dbReference>
<dbReference type="GO" id="GO:0005794">
    <property type="term" value="C:Golgi apparatus"/>
    <property type="evidence" value="ECO:0000250"/>
    <property type="project" value="UniProtKB"/>
</dbReference>
<dbReference type="GO" id="GO:0005764">
    <property type="term" value="C:lysosome"/>
    <property type="evidence" value="ECO:0000314"/>
    <property type="project" value="UniProtKB"/>
</dbReference>
<dbReference type="GO" id="GO:0042470">
    <property type="term" value="C:melanosome"/>
    <property type="evidence" value="ECO:0007669"/>
    <property type="project" value="UniProtKB-SubCell"/>
</dbReference>
<dbReference type="GO" id="GO:0045121">
    <property type="term" value="C:membrane raft"/>
    <property type="evidence" value="ECO:0000250"/>
    <property type="project" value="UniProtKB"/>
</dbReference>
<dbReference type="GO" id="GO:0005739">
    <property type="term" value="C:mitochondrion"/>
    <property type="evidence" value="ECO:0007005"/>
    <property type="project" value="MGI"/>
</dbReference>
<dbReference type="GO" id="GO:0055037">
    <property type="term" value="C:recycling endosome"/>
    <property type="evidence" value="ECO:0000250"/>
    <property type="project" value="UniProtKB"/>
</dbReference>
<dbReference type="GO" id="GO:0004175">
    <property type="term" value="F:endopeptidase activity"/>
    <property type="evidence" value="ECO:0000250"/>
    <property type="project" value="UniProtKB"/>
</dbReference>
<dbReference type="GO" id="GO:0035727">
    <property type="term" value="F:lysophosphatidic acid binding"/>
    <property type="evidence" value="ECO:0000250"/>
    <property type="project" value="UniProtKB"/>
</dbReference>
<dbReference type="GO" id="GO:0046872">
    <property type="term" value="F:metal ion binding"/>
    <property type="evidence" value="ECO:0007669"/>
    <property type="project" value="UniProtKB-KW"/>
</dbReference>
<dbReference type="GO" id="GO:0008233">
    <property type="term" value="F:peptidase activity"/>
    <property type="evidence" value="ECO:0000250"/>
    <property type="project" value="UniProtKB"/>
</dbReference>
<dbReference type="GO" id="GO:0004252">
    <property type="term" value="F:serine-type endopeptidase activity"/>
    <property type="evidence" value="ECO:0007669"/>
    <property type="project" value="InterPro"/>
</dbReference>
<dbReference type="GO" id="GO:0008236">
    <property type="term" value="F:serine-type peptidase activity"/>
    <property type="evidence" value="ECO:0000250"/>
    <property type="project" value="UniProtKB"/>
</dbReference>
<dbReference type="GO" id="GO:0120146">
    <property type="term" value="F:sulfatide binding"/>
    <property type="evidence" value="ECO:0000250"/>
    <property type="project" value="UniProtKB"/>
</dbReference>
<dbReference type="GO" id="GO:0008240">
    <property type="term" value="F:tripeptidyl-peptidase activity"/>
    <property type="evidence" value="ECO:0000314"/>
    <property type="project" value="MGI"/>
</dbReference>
<dbReference type="GO" id="GO:0045453">
    <property type="term" value="P:bone resorption"/>
    <property type="evidence" value="ECO:0000250"/>
    <property type="project" value="UniProtKB"/>
</dbReference>
<dbReference type="GO" id="GO:0030855">
    <property type="term" value="P:epithelial cell differentiation"/>
    <property type="evidence" value="ECO:0007669"/>
    <property type="project" value="Ensembl"/>
</dbReference>
<dbReference type="GO" id="GO:1905146">
    <property type="term" value="P:lysosomal protein catabolic process"/>
    <property type="evidence" value="ECO:0000315"/>
    <property type="project" value="MGI"/>
</dbReference>
<dbReference type="GO" id="GO:0007040">
    <property type="term" value="P:lysosome organization"/>
    <property type="evidence" value="ECO:0000315"/>
    <property type="project" value="MGI"/>
</dbReference>
<dbReference type="GO" id="GO:0007399">
    <property type="term" value="P:nervous system development"/>
    <property type="evidence" value="ECO:0000250"/>
    <property type="project" value="UniProtKB"/>
</dbReference>
<dbReference type="GO" id="GO:0050885">
    <property type="term" value="P:neuromuscular process controlling balance"/>
    <property type="evidence" value="ECO:0000315"/>
    <property type="project" value="MGI"/>
</dbReference>
<dbReference type="GO" id="GO:0043171">
    <property type="term" value="P:peptide catabolic process"/>
    <property type="evidence" value="ECO:0000250"/>
    <property type="project" value="UniProtKB"/>
</dbReference>
<dbReference type="GO" id="GO:0070198">
    <property type="term" value="P:protein localization to chromosome, telomeric region"/>
    <property type="evidence" value="ECO:0007669"/>
    <property type="project" value="Ensembl"/>
</dbReference>
<dbReference type="GO" id="GO:0006508">
    <property type="term" value="P:proteolysis"/>
    <property type="evidence" value="ECO:0000250"/>
    <property type="project" value="UniProtKB"/>
</dbReference>
<dbReference type="CDD" id="cd04056">
    <property type="entry name" value="Peptidases_S53"/>
    <property type="match status" value="1"/>
</dbReference>
<dbReference type="CDD" id="cd11377">
    <property type="entry name" value="Pro-peptidase_S53"/>
    <property type="match status" value="1"/>
</dbReference>
<dbReference type="FunFam" id="3.40.50.200:FF:000012">
    <property type="entry name" value="Tripeptidyl-peptidase 1 preproprotein"/>
    <property type="match status" value="1"/>
</dbReference>
<dbReference type="Gene3D" id="3.40.50.200">
    <property type="entry name" value="Peptidase S8/S53 domain"/>
    <property type="match status" value="1"/>
</dbReference>
<dbReference type="InterPro" id="IPR000209">
    <property type="entry name" value="Peptidase_S8/S53_dom"/>
</dbReference>
<dbReference type="InterPro" id="IPR036852">
    <property type="entry name" value="Peptidase_S8/S53_dom_sf"/>
</dbReference>
<dbReference type="InterPro" id="IPR015366">
    <property type="entry name" value="S53_propep"/>
</dbReference>
<dbReference type="InterPro" id="IPR030400">
    <property type="entry name" value="Sedolisin_dom"/>
</dbReference>
<dbReference type="InterPro" id="IPR050819">
    <property type="entry name" value="Tripeptidyl-peptidase_I"/>
</dbReference>
<dbReference type="PANTHER" id="PTHR14218">
    <property type="entry name" value="PROTEASE S8 TRIPEPTIDYL PEPTIDASE I CLN2"/>
    <property type="match status" value="1"/>
</dbReference>
<dbReference type="PANTHER" id="PTHR14218:SF15">
    <property type="entry name" value="TRIPEPTIDYL-PEPTIDASE 1"/>
    <property type="match status" value="1"/>
</dbReference>
<dbReference type="Pfam" id="PF00082">
    <property type="entry name" value="Peptidase_S8"/>
    <property type="match status" value="1"/>
</dbReference>
<dbReference type="Pfam" id="PF09286">
    <property type="entry name" value="Pro-kuma_activ"/>
    <property type="match status" value="1"/>
</dbReference>
<dbReference type="SMART" id="SM00944">
    <property type="entry name" value="Pro-kuma_activ"/>
    <property type="match status" value="1"/>
</dbReference>
<dbReference type="SUPFAM" id="SSF54897">
    <property type="entry name" value="Protease propeptides/inhibitors"/>
    <property type="match status" value="1"/>
</dbReference>
<dbReference type="SUPFAM" id="SSF52743">
    <property type="entry name" value="Subtilisin-like"/>
    <property type="match status" value="1"/>
</dbReference>
<dbReference type="PROSITE" id="PS51695">
    <property type="entry name" value="SEDOLISIN"/>
    <property type="match status" value="1"/>
</dbReference>
<reference key="1">
    <citation type="journal article" date="1999" name="FEBS Lett.">
        <title>Classical late infantile neuronal ceroid lipofuscinosis fibroblasts are deficient in lysosomal tripeptidyl peptidase I.</title>
        <authorList>
            <person name="Vines D.J."/>
            <person name="Warburton M.J."/>
        </authorList>
    </citation>
    <scope>NUCLEOTIDE SEQUENCE [MRNA]</scope>
</reference>
<reference key="2">
    <citation type="journal article" date="1999" name="Mamm. Genome">
        <title>Characterization and chromosomal mapping of a mouse ortholog of the late-infantile ceroid-lipofuscinosis gene CLN2.</title>
        <authorList>
            <person name="Katz M.L."/>
            <person name="Liu P.-C."/>
            <person name="Grob-Nunn S.E."/>
            <person name="Shibuya H."/>
            <person name="Johnson G.S."/>
        </authorList>
    </citation>
    <scope>NUCLEOTIDE SEQUENCE [GENOMIC DNA]</scope>
</reference>
<reference key="3">
    <citation type="submission" date="1998-12" db="EMBL/GenBank/DDBJ databases">
        <title>Murine homologue of the lysosomal pepstatin insensitive protease which is deficient in human classical late infantile neuronal ceroid lipofuscinosis.</title>
        <authorList>
            <person name="Sleat D.E."/>
            <person name="Lobel P."/>
        </authorList>
    </citation>
    <scope>NUCLEOTIDE SEQUENCE</scope>
</reference>
<reference key="4">
    <citation type="journal article" date="2005" name="Science">
        <title>The transcriptional landscape of the mammalian genome.</title>
        <authorList>
            <person name="Carninci P."/>
            <person name="Kasukawa T."/>
            <person name="Katayama S."/>
            <person name="Gough J."/>
            <person name="Frith M.C."/>
            <person name="Maeda N."/>
            <person name="Oyama R."/>
            <person name="Ravasi T."/>
            <person name="Lenhard B."/>
            <person name="Wells C."/>
            <person name="Kodzius R."/>
            <person name="Shimokawa K."/>
            <person name="Bajic V.B."/>
            <person name="Brenner S.E."/>
            <person name="Batalov S."/>
            <person name="Forrest A.R."/>
            <person name="Zavolan M."/>
            <person name="Davis M.J."/>
            <person name="Wilming L.G."/>
            <person name="Aidinis V."/>
            <person name="Allen J.E."/>
            <person name="Ambesi-Impiombato A."/>
            <person name="Apweiler R."/>
            <person name="Aturaliya R.N."/>
            <person name="Bailey T.L."/>
            <person name="Bansal M."/>
            <person name="Baxter L."/>
            <person name="Beisel K.W."/>
            <person name="Bersano T."/>
            <person name="Bono H."/>
            <person name="Chalk A.M."/>
            <person name="Chiu K.P."/>
            <person name="Choudhary V."/>
            <person name="Christoffels A."/>
            <person name="Clutterbuck D.R."/>
            <person name="Crowe M.L."/>
            <person name="Dalla E."/>
            <person name="Dalrymple B.P."/>
            <person name="de Bono B."/>
            <person name="Della Gatta G."/>
            <person name="di Bernardo D."/>
            <person name="Down T."/>
            <person name="Engstrom P."/>
            <person name="Fagiolini M."/>
            <person name="Faulkner G."/>
            <person name="Fletcher C.F."/>
            <person name="Fukushima T."/>
            <person name="Furuno M."/>
            <person name="Futaki S."/>
            <person name="Gariboldi M."/>
            <person name="Georgii-Hemming P."/>
            <person name="Gingeras T.R."/>
            <person name="Gojobori T."/>
            <person name="Green R.E."/>
            <person name="Gustincich S."/>
            <person name="Harbers M."/>
            <person name="Hayashi Y."/>
            <person name="Hensch T.K."/>
            <person name="Hirokawa N."/>
            <person name="Hill D."/>
            <person name="Huminiecki L."/>
            <person name="Iacono M."/>
            <person name="Ikeo K."/>
            <person name="Iwama A."/>
            <person name="Ishikawa T."/>
            <person name="Jakt M."/>
            <person name="Kanapin A."/>
            <person name="Katoh M."/>
            <person name="Kawasawa Y."/>
            <person name="Kelso J."/>
            <person name="Kitamura H."/>
            <person name="Kitano H."/>
            <person name="Kollias G."/>
            <person name="Krishnan S.P."/>
            <person name="Kruger A."/>
            <person name="Kummerfeld S.K."/>
            <person name="Kurochkin I.V."/>
            <person name="Lareau L.F."/>
            <person name="Lazarevic D."/>
            <person name="Lipovich L."/>
            <person name="Liu J."/>
            <person name="Liuni S."/>
            <person name="McWilliam S."/>
            <person name="Madan Babu M."/>
            <person name="Madera M."/>
            <person name="Marchionni L."/>
            <person name="Matsuda H."/>
            <person name="Matsuzawa S."/>
            <person name="Miki H."/>
            <person name="Mignone F."/>
            <person name="Miyake S."/>
            <person name="Morris K."/>
            <person name="Mottagui-Tabar S."/>
            <person name="Mulder N."/>
            <person name="Nakano N."/>
            <person name="Nakauchi H."/>
            <person name="Ng P."/>
            <person name="Nilsson R."/>
            <person name="Nishiguchi S."/>
            <person name="Nishikawa S."/>
            <person name="Nori F."/>
            <person name="Ohara O."/>
            <person name="Okazaki Y."/>
            <person name="Orlando V."/>
            <person name="Pang K.C."/>
            <person name="Pavan W.J."/>
            <person name="Pavesi G."/>
            <person name="Pesole G."/>
            <person name="Petrovsky N."/>
            <person name="Piazza S."/>
            <person name="Reed J."/>
            <person name="Reid J.F."/>
            <person name="Ring B.Z."/>
            <person name="Ringwald M."/>
            <person name="Rost B."/>
            <person name="Ruan Y."/>
            <person name="Salzberg S.L."/>
            <person name="Sandelin A."/>
            <person name="Schneider C."/>
            <person name="Schoenbach C."/>
            <person name="Sekiguchi K."/>
            <person name="Semple C.A."/>
            <person name="Seno S."/>
            <person name="Sessa L."/>
            <person name="Sheng Y."/>
            <person name="Shibata Y."/>
            <person name="Shimada H."/>
            <person name="Shimada K."/>
            <person name="Silva D."/>
            <person name="Sinclair B."/>
            <person name="Sperling S."/>
            <person name="Stupka E."/>
            <person name="Sugiura K."/>
            <person name="Sultana R."/>
            <person name="Takenaka Y."/>
            <person name="Taki K."/>
            <person name="Tammoja K."/>
            <person name="Tan S.L."/>
            <person name="Tang S."/>
            <person name="Taylor M.S."/>
            <person name="Tegner J."/>
            <person name="Teichmann S.A."/>
            <person name="Ueda H.R."/>
            <person name="van Nimwegen E."/>
            <person name="Verardo R."/>
            <person name="Wei C.L."/>
            <person name="Yagi K."/>
            <person name="Yamanishi H."/>
            <person name="Zabarovsky E."/>
            <person name="Zhu S."/>
            <person name="Zimmer A."/>
            <person name="Hide W."/>
            <person name="Bult C."/>
            <person name="Grimmond S.M."/>
            <person name="Teasdale R.D."/>
            <person name="Liu E.T."/>
            <person name="Brusic V."/>
            <person name="Quackenbush J."/>
            <person name="Wahlestedt C."/>
            <person name="Mattick J.S."/>
            <person name="Hume D.A."/>
            <person name="Kai C."/>
            <person name="Sasaki D."/>
            <person name="Tomaru Y."/>
            <person name="Fukuda S."/>
            <person name="Kanamori-Katayama M."/>
            <person name="Suzuki M."/>
            <person name="Aoki J."/>
            <person name="Arakawa T."/>
            <person name="Iida J."/>
            <person name="Imamura K."/>
            <person name="Itoh M."/>
            <person name="Kato T."/>
            <person name="Kawaji H."/>
            <person name="Kawagashira N."/>
            <person name="Kawashima T."/>
            <person name="Kojima M."/>
            <person name="Kondo S."/>
            <person name="Konno H."/>
            <person name="Nakano K."/>
            <person name="Ninomiya N."/>
            <person name="Nishio T."/>
            <person name="Okada M."/>
            <person name="Plessy C."/>
            <person name="Shibata K."/>
            <person name="Shiraki T."/>
            <person name="Suzuki S."/>
            <person name="Tagami M."/>
            <person name="Waki K."/>
            <person name="Watahiki A."/>
            <person name="Okamura-Oho Y."/>
            <person name="Suzuki H."/>
            <person name="Kawai J."/>
            <person name="Hayashizaki Y."/>
        </authorList>
    </citation>
    <scope>NUCLEOTIDE SEQUENCE [LARGE SCALE MRNA]</scope>
    <source>
        <strain>C57BL/6J</strain>
        <strain>NOD</strain>
        <tissue>Head</tissue>
        <tissue>Kidney</tissue>
    </source>
</reference>
<reference key="5">
    <citation type="journal article" date="2004" name="Genome Res.">
        <title>The status, quality, and expansion of the NIH full-length cDNA project: the Mammalian Gene Collection (MGC).</title>
        <authorList>
            <consortium name="The MGC Project Team"/>
        </authorList>
    </citation>
    <scope>NUCLEOTIDE SEQUENCE [LARGE SCALE MRNA]</scope>
    <source>
        <strain>C57BL/6J</strain>
        <tissue>Retina</tissue>
    </source>
</reference>
<reference key="6">
    <citation type="journal article" date="2005" name="Mol. Cell. Proteomics">
        <title>High throughput quantitative glycomics and glycoform-focused proteomics of murine dermis and epidermis.</title>
        <authorList>
            <person name="Uematsu R."/>
            <person name="Furukawa J."/>
            <person name="Nakagawa H."/>
            <person name="Shinohara Y."/>
            <person name="Deguchi K."/>
            <person name="Monde K."/>
            <person name="Nishimura S."/>
        </authorList>
    </citation>
    <scope>GLYCOSYLATION [LARGE SCALE ANALYSIS] AT ASN-221</scope>
    <source>
        <tissue>Epidermis</tissue>
    </source>
</reference>
<reference key="7">
    <citation type="journal article" date="2009" name="BMC Cell Biol.">
        <title>Novel interactions of CLN5 support molecular networking between neuronal ceroid lipofuscinosis proteins.</title>
        <authorList>
            <person name="Lyly A."/>
            <person name="von Schantz C."/>
            <person name="Heine C."/>
            <person name="Schmiedt M.L."/>
            <person name="Sipilae T."/>
            <person name="Jalanko A."/>
            <person name="Kyttaelae A."/>
        </authorList>
    </citation>
    <scope>INTERACTION WITH CLN5</scope>
    <scope>SUBCELLULAR LOCATION</scope>
</reference>
<reference key="8">
    <citation type="journal article" date="2010" name="Cell">
        <title>A tissue-specific atlas of mouse protein phosphorylation and expression.</title>
        <authorList>
            <person name="Huttlin E.L."/>
            <person name="Jedrychowski M.P."/>
            <person name="Elias J.E."/>
            <person name="Goswami T."/>
            <person name="Rad R."/>
            <person name="Beausoleil S.A."/>
            <person name="Villen J."/>
            <person name="Haas W."/>
            <person name="Sowa M.E."/>
            <person name="Gygi S.P."/>
        </authorList>
    </citation>
    <scope>IDENTIFICATION BY MASS SPECTROMETRY [LARGE SCALE ANALYSIS]</scope>
    <source>
        <tissue>Brain</tissue>
        <tissue>Brown adipose tissue</tissue>
        <tissue>Kidney</tissue>
        <tissue>Liver</tissue>
        <tissue>Lung</tissue>
        <tissue>Pancreas</tissue>
        <tissue>Spleen</tissue>
        <tissue>Testis</tissue>
    </source>
</reference>
<reference key="9">
    <citation type="journal article" date="2017" name="PLoS ONE">
        <title>A tailored mouse model of CLN2 disease: A nonsense mutant for testing personalized therapies.</title>
        <authorList>
            <person name="Geraets R.D."/>
            <person name="Langin L.M."/>
            <person name="Cain J.T."/>
            <person name="Parker C.M."/>
            <person name="Beraldi R."/>
            <person name="Kovacs A.D."/>
            <person name="Weimer J.M."/>
            <person name="Pearce D.A."/>
        </authorList>
    </citation>
    <scope>FUNCTION</scope>
    <scope>CATALYTIC ACTIVITY</scope>
    <scope>MUTAGENESIS OF 207-ARG--PRO-562</scope>
</reference>
<keyword id="KW-0068">Autocatalytic cleavage</keyword>
<keyword id="KW-0106">Calcium</keyword>
<keyword id="KW-1015">Disulfide bond</keyword>
<keyword id="KW-0325">Glycoprotein</keyword>
<keyword id="KW-0378">Hydrolase</keyword>
<keyword id="KW-0458">Lysosome</keyword>
<keyword id="KW-0479">Metal-binding</keyword>
<keyword id="KW-0645">Protease</keyword>
<keyword id="KW-1185">Reference proteome</keyword>
<keyword id="KW-0720">Serine protease</keyword>
<keyword id="KW-0732">Signal</keyword>
<keyword id="KW-0865">Zymogen</keyword>
<gene>
    <name type="primary">Tpp1</name>
    <name type="synonym">Cln2</name>
</gene>
<accession>O89023</accession>
<accession>Q543Q8</accession>
<accession>Q9QUS7</accession>
<feature type="signal peptide" evidence="1">
    <location>
        <begin position="1"/>
        <end position="19"/>
    </location>
</feature>
<feature type="propeptide" id="PRO_0000027378" description="Removed in mature form" evidence="1">
    <location>
        <begin position="20"/>
        <end position="194"/>
    </location>
</feature>
<feature type="chain" id="PRO_0000027379" description="Tripeptidyl-peptidase 1">
    <location>
        <begin position="195"/>
        <end position="562"/>
    </location>
</feature>
<feature type="domain" description="Peptidase S53">
    <location>
        <begin position="198"/>
        <end position="562"/>
    </location>
</feature>
<feature type="active site" description="Charge relay system" evidence="1">
    <location>
        <position position="271"/>
    </location>
</feature>
<feature type="active site" description="Charge relay system" evidence="1">
    <location>
        <position position="275"/>
    </location>
</feature>
<feature type="active site" description="Charge relay system" evidence="1">
    <location>
        <position position="474"/>
    </location>
</feature>
<feature type="binding site" evidence="1">
    <location>
        <position position="516"/>
    </location>
    <ligand>
        <name>Ca(2+)</name>
        <dbReference type="ChEBI" id="CHEBI:29108"/>
    </ligand>
</feature>
<feature type="binding site" evidence="1">
    <location>
        <position position="517"/>
    </location>
    <ligand>
        <name>Ca(2+)</name>
        <dbReference type="ChEBI" id="CHEBI:29108"/>
    </ligand>
</feature>
<feature type="binding site" evidence="1">
    <location>
        <position position="538"/>
    </location>
    <ligand>
        <name>Ca(2+)</name>
        <dbReference type="ChEBI" id="CHEBI:29108"/>
    </ligand>
</feature>
<feature type="binding site" evidence="1">
    <location>
        <position position="540"/>
    </location>
    <ligand>
        <name>Ca(2+)</name>
        <dbReference type="ChEBI" id="CHEBI:29108"/>
    </ligand>
</feature>
<feature type="binding site" evidence="1">
    <location>
        <position position="542"/>
    </location>
    <ligand>
        <name>Ca(2+)</name>
        <dbReference type="ChEBI" id="CHEBI:29108"/>
    </ligand>
</feature>
<feature type="glycosylation site" description="N-linked (GlcNAc...) asparagine" evidence="2">
    <location>
        <position position="209"/>
    </location>
</feature>
<feature type="glycosylation site" description="N-linked (GlcNAc...) (high mannose) asparagine" evidence="3">
    <location>
        <position position="221"/>
    </location>
</feature>
<feature type="glycosylation site" description="N-linked (GlcNAc...) asparagine" evidence="2">
    <location>
        <position position="285"/>
    </location>
</feature>
<feature type="glycosylation site" description="N-linked (GlcNAc...) asparagine" evidence="2">
    <location>
        <position position="312"/>
    </location>
</feature>
<feature type="glycosylation site" description="N-linked (GlcNAc...) asparagine" evidence="2">
    <location>
        <position position="442"/>
    </location>
</feature>
<feature type="disulfide bond" evidence="1">
    <location>
        <begin position="111"/>
        <end position="122"/>
    </location>
</feature>
<feature type="disulfide bond" evidence="1">
    <location>
        <begin position="364"/>
        <end position="525"/>
    </location>
</feature>
<feature type="disulfide bond" evidence="1">
    <location>
        <begin position="521"/>
        <end position="536"/>
    </location>
</feature>
<feature type="mutagenesis site" description="Premature lethality from 3 months of age, with no survival beyond 6 months. Progressive defects in motor coordination and balance from age 3 months, accompanied by a twitching phenotype. Marked degeneration of astrocytes in the cerebrum. Significant loss of peptidase activity, leading to accumulation of the TPP1 substrate ATP5MC1 in lysosomes." evidence="5">
    <location>
        <begin position="207"/>
        <end position="562"/>
    </location>
</feature>
<feature type="sequence conflict" description="In Ref. 1." evidence="6" ref="1">
    <original>M</original>
    <variation>V</variation>
    <location>
        <position position="1"/>
    </location>
</feature>
<feature type="sequence conflict" description="In Ref. 1." evidence="6" ref="1">
    <original>P</original>
    <variation>LDPFVP</variation>
    <location>
        <position position="562"/>
    </location>
</feature>
<sequence length="562" mass="61342">MGLQARLLGLLALVIAGKCTYNPEPDQRWMLPPGWVSLGRVDPEEELSLTFALKQRNLERLSELVQAVSDPSSPQYGKYLTLEDVAELVQPSPLTLLTVQKWLSAAGARNCDSVTTQDFLTCWLSVRQAELLLPGAEFHRYVGGPTKTHVIRSPHPYQLPQALAPHVDFVGGLHRFPPSSPRQRPEPQQVGTVSLHLGVTPSVLRQRYNLTAKDVGSGTTNNSQACAQFLEQYFHNSDLTEFMRLFGGSFTHQASVAKVVGKQGRGRAGIEASLDVEYLMSAGANISTWVYSSPGRHEAQEPFLQWLLLLSNESSLPHVHTVSYGDDEDSLSSIYIQRVNTEFMKAAARGLTLLFASGDTGAGCWSVSGRHKFRPSFPASSPYVTTVGGTSFKNPFLITDEVVDYISGGGFSNVFPRPPYQEEAVAQFLKSSSHLPPSSYFNASGRAYPDVAALSDGYWVVSNMVPIPWVSGTSASTPVFGGILSLINEHRILNGRPPLGFLNPRLYQQHGTGLFDVTHGCHESCLNEEVEGQGFCSGPGWDPVTGWGTPNFPALLKTLLNP</sequence>
<evidence type="ECO:0000250" key="1">
    <source>
        <dbReference type="UniProtKB" id="O14773"/>
    </source>
</evidence>
<evidence type="ECO:0000255" key="2"/>
<evidence type="ECO:0000269" key="3">
    <source>
    </source>
</evidence>
<evidence type="ECO:0000269" key="4">
    <source>
    </source>
</evidence>
<evidence type="ECO:0000269" key="5">
    <source>
    </source>
</evidence>
<evidence type="ECO:0000305" key="6"/>
<name>TPP1_MOUSE</name>